<evidence type="ECO:0000255" key="1">
    <source>
        <dbReference type="HAMAP-Rule" id="MF_00203"/>
    </source>
</evidence>
<name>UVRC_PSEPK</name>
<protein>
    <recommendedName>
        <fullName evidence="1">UvrABC system protein C</fullName>
        <shortName evidence="1">Protein UvrC</shortName>
    </recommendedName>
    <alternativeName>
        <fullName evidence="1">Excinuclease ABC subunit C</fullName>
    </alternativeName>
</protein>
<gene>
    <name evidence="1" type="primary">uvrC</name>
    <name type="ordered locus">PP_4098</name>
</gene>
<organism>
    <name type="scientific">Pseudomonas putida (strain ATCC 47054 / DSM 6125 / CFBP 8728 / NCIMB 11950 / KT2440)</name>
    <dbReference type="NCBI Taxonomy" id="160488"/>
    <lineage>
        <taxon>Bacteria</taxon>
        <taxon>Pseudomonadati</taxon>
        <taxon>Pseudomonadota</taxon>
        <taxon>Gammaproteobacteria</taxon>
        <taxon>Pseudomonadales</taxon>
        <taxon>Pseudomonadaceae</taxon>
        <taxon>Pseudomonas</taxon>
    </lineage>
</organism>
<proteinExistence type="inferred from homology"/>
<comment type="function">
    <text evidence="1">The UvrABC repair system catalyzes the recognition and processing of DNA lesions. UvrC both incises the 5' and 3' sides of the lesion. The N-terminal half is responsible for the 3' incision and the C-terminal half is responsible for the 5' incision.</text>
</comment>
<comment type="subunit">
    <text evidence="1">Interacts with UvrB in an incision complex.</text>
</comment>
<comment type="subcellular location">
    <subcellularLocation>
        <location evidence="1">Cytoplasm</location>
    </subcellularLocation>
</comment>
<comment type="similarity">
    <text evidence="1">Belongs to the UvrC family.</text>
</comment>
<feature type="chain" id="PRO_0000138328" description="UvrABC system protein C">
    <location>
        <begin position="1"/>
        <end position="607"/>
    </location>
</feature>
<feature type="domain" description="GIY-YIG" evidence="1">
    <location>
        <begin position="16"/>
        <end position="94"/>
    </location>
</feature>
<feature type="domain" description="UVR" evidence="1">
    <location>
        <begin position="203"/>
        <end position="238"/>
    </location>
</feature>
<sequence>MSQVFDASAFLATCSGRPGVYRMFDGEARLLYVGKAKNLKKRLASYFRKTGLAPKTAALVARIAQVETTITANETEALLLEQNLIKEWRPPYNILLRDDKSYPYVFLSDGEFPRLGIHRGAKKAKGRYFGPYPSAGAIRESLSLLQKAFSVRQCEDSYYANRTRPCLQYQIKRCKGPCTDLVTAEEYAEDVRHSVMFLEGRSQQLGNELNAEMEKAAMALDFEKAAELRDQIALLRRVQDQQYIEGGSGDVDVIAAFVNPGGACVHLISVRGGRVLGSKNFFPQVGIEEEVAEVMAAFLSQYYLGNAERELPGELIVNVVHEDFNAITEALHTLRGRELTISHRVRGTRARWQQLAVTNAEQALNARLANRQHMAARFEALAEVLGLDEVPQRLECYDISHSSGEATVASCVVFGPEGPIKSDYRRFNIEDVTAGDDYAAMHQALTRRYGRIKDGEGKLPDVLLVDGGKGQLNMARDVMQELGFTDLTLLGVAKGVTRKAGFETLYLNDVHHEFTLKGDSSALHLIQQIRDEAHRFAITGHRARRGKARRVSSLEDVAGVGPKRRRDLLKHFGGLQELNRASIDEIAKAPGISKKLAESIYASLHSE</sequence>
<keyword id="KW-0963">Cytoplasm</keyword>
<keyword id="KW-0227">DNA damage</keyword>
<keyword id="KW-0228">DNA excision</keyword>
<keyword id="KW-0234">DNA repair</keyword>
<keyword id="KW-0267">Excision nuclease</keyword>
<keyword id="KW-1185">Reference proteome</keyword>
<keyword id="KW-0742">SOS response</keyword>
<accession>Q88FJ7</accession>
<dbReference type="EMBL" id="AE015451">
    <property type="protein sequence ID" value="AAN69682.1"/>
    <property type="molecule type" value="Genomic_DNA"/>
</dbReference>
<dbReference type="RefSeq" id="NP_746218.1">
    <property type="nucleotide sequence ID" value="NC_002947.4"/>
</dbReference>
<dbReference type="RefSeq" id="WP_010954883.1">
    <property type="nucleotide sequence ID" value="NZ_CP169744.1"/>
</dbReference>
<dbReference type="SMR" id="Q88FJ7"/>
<dbReference type="STRING" id="160488.PP_4098"/>
<dbReference type="PaxDb" id="160488-PP_4098"/>
<dbReference type="GeneID" id="83679212"/>
<dbReference type="KEGG" id="ppu:PP_4098"/>
<dbReference type="PATRIC" id="fig|160488.4.peg.4355"/>
<dbReference type="eggNOG" id="COG0322">
    <property type="taxonomic scope" value="Bacteria"/>
</dbReference>
<dbReference type="HOGENOM" id="CLU_014841_3_0_6"/>
<dbReference type="OrthoDB" id="9804933at2"/>
<dbReference type="PhylomeDB" id="Q88FJ7"/>
<dbReference type="BioCyc" id="PPUT160488:G1G01-4365-MONOMER"/>
<dbReference type="Proteomes" id="UP000000556">
    <property type="component" value="Chromosome"/>
</dbReference>
<dbReference type="GO" id="GO:0005737">
    <property type="term" value="C:cytoplasm"/>
    <property type="evidence" value="ECO:0007669"/>
    <property type="project" value="UniProtKB-SubCell"/>
</dbReference>
<dbReference type="GO" id="GO:0009380">
    <property type="term" value="C:excinuclease repair complex"/>
    <property type="evidence" value="ECO:0007669"/>
    <property type="project" value="InterPro"/>
</dbReference>
<dbReference type="GO" id="GO:0003677">
    <property type="term" value="F:DNA binding"/>
    <property type="evidence" value="ECO:0007669"/>
    <property type="project" value="UniProtKB-UniRule"/>
</dbReference>
<dbReference type="GO" id="GO:0009381">
    <property type="term" value="F:excinuclease ABC activity"/>
    <property type="evidence" value="ECO:0007669"/>
    <property type="project" value="UniProtKB-UniRule"/>
</dbReference>
<dbReference type="GO" id="GO:0006289">
    <property type="term" value="P:nucleotide-excision repair"/>
    <property type="evidence" value="ECO:0007669"/>
    <property type="project" value="UniProtKB-UniRule"/>
</dbReference>
<dbReference type="GO" id="GO:0009432">
    <property type="term" value="P:SOS response"/>
    <property type="evidence" value="ECO:0007669"/>
    <property type="project" value="UniProtKB-UniRule"/>
</dbReference>
<dbReference type="CDD" id="cd10434">
    <property type="entry name" value="GIY-YIG_UvrC_Cho"/>
    <property type="match status" value="1"/>
</dbReference>
<dbReference type="FunFam" id="1.10.150.20:FF:000005">
    <property type="entry name" value="UvrABC system protein C"/>
    <property type="match status" value="1"/>
</dbReference>
<dbReference type="FunFam" id="3.30.420.340:FF:000001">
    <property type="entry name" value="UvrABC system protein C"/>
    <property type="match status" value="1"/>
</dbReference>
<dbReference type="FunFam" id="3.40.1440.10:FF:000001">
    <property type="entry name" value="UvrABC system protein C"/>
    <property type="match status" value="1"/>
</dbReference>
<dbReference type="Gene3D" id="1.10.150.20">
    <property type="entry name" value="5' to 3' exonuclease, C-terminal subdomain"/>
    <property type="match status" value="1"/>
</dbReference>
<dbReference type="Gene3D" id="3.40.1440.10">
    <property type="entry name" value="GIY-YIG endonuclease"/>
    <property type="match status" value="1"/>
</dbReference>
<dbReference type="Gene3D" id="4.10.860.10">
    <property type="entry name" value="UVR domain"/>
    <property type="match status" value="1"/>
</dbReference>
<dbReference type="Gene3D" id="3.30.420.340">
    <property type="entry name" value="UvrC, RNAse H endonuclease domain"/>
    <property type="match status" value="1"/>
</dbReference>
<dbReference type="HAMAP" id="MF_00203">
    <property type="entry name" value="UvrC"/>
    <property type="match status" value="1"/>
</dbReference>
<dbReference type="InterPro" id="IPR000305">
    <property type="entry name" value="GIY-YIG_endonuc"/>
</dbReference>
<dbReference type="InterPro" id="IPR035901">
    <property type="entry name" value="GIY-YIG_endonuc_sf"/>
</dbReference>
<dbReference type="InterPro" id="IPR047296">
    <property type="entry name" value="GIY-YIG_UvrC_Cho"/>
</dbReference>
<dbReference type="InterPro" id="IPR003583">
    <property type="entry name" value="Hlx-hairpin-Hlx_DNA-bd_motif"/>
</dbReference>
<dbReference type="InterPro" id="IPR010994">
    <property type="entry name" value="RuvA_2-like"/>
</dbReference>
<dbReference type="InterPro" id="IPR001943">
    <property type="entry name" value="UVR_dom"/>
</dbReference>
<dbReference type="InterPro" id="IPR036876">
    <property type="entry name" value="UVR_dom_sf"/>
</dbReference>
<dbReference type="InterPro" id="IPR050066">
    <property type="entry name" value="UvrABC_protein_C"/>
</dbReference>
<dbReference type="InterPro" id="IPR004791">
    <property type="entry name" value="UvrC"/>
</dbReference>
<dbReference type="InterPro" id="IPR001162">
    <property type="entry name" value="UvrC_RNase_H_dom"/>
</dbReference>
<dbReference type="InterPro" id="IPR038476">
    <property type="entry name" value="UvrC_RNase_H_dom_sf"/>
</dbReference>
<dbReference type="NCBIfam" id="NF001824">
    <property type="entry name" value="PRK00558.1-5"/>
    <property type="match status" value="1"/>
</dbReference>
<dbReference type="NCBIfam" id="TIGR00194">
    <property type="entry name" value="uvrC"/>
    <property type="match status" value="1"/>
</dbReference>
<dbReference type="PANTHER" id="PTHR30562:SF1">
    <property type="entry name" value="UVRABC SYSTEM PROTEIN C"/>
    <property type="match status" value="1"/>
</dbReference>
<dbReference type="PANTHER" id="PTHR30562">
    <property type="entry name" value="UVRC/OXIDOREDUCTASE"/>
    <property type="match status" value="1"/>
</dbReference>
<dbReference type="Pfam" id="PF01541">
    <property type="entry name" value="GIY-YIG"/>
    <property type="match status" value="1"/>
</dbReference>
<dbReference type="Pfam" id="PF14520">
    <property type="entry name" value="HHH_5"/>
    <property type="match status" value="1"/>
</dbReference>
<dbReference type="Pfam" id="PF02151">
    <property type="entry name" value="UVR"/>
    <property type="match status" value="1"/>
</dbReference>
<dbReference type="Pfam" id="PF22920">
    <property type="entry name" value="UvrC_RNaseH"/>
    <property type="match status" value="1"/>
</dbReference>
<dbReference type="Pfam" id="PF08459">
    <property type="entry name" value="UvrC_RNaseH_dom"/>
    <property type="match status" value="1"/>
</dbReference>
<dbReference type="SMART" id="SM00465">
    <property type="entry name" value="GIYc"/>
    <property type="match status" value="1"/>
</dbReference>
<dbReference type="SMART" id="SM00278">
    <property type="entry name" value="HhH1"/>
    <property type="match status" value="2"/>
</dbReference>
<dbReference type="SUPFAM" id="SSF46600">
    <property type="entry name" value="C-terminal UvrC-binding domain of UvrB"/>
    <property type="match status" value="1"/>
</dbReference>
<dbReference type="SUPFAM" id="SSF82771">
    <property type="entry name" value="GIY-YIG endonuclease"/>
    <property type="match status" value="1"/>
</dbReference>
<dbReference type="SUPFAM" id="SSF47781">
    <property type="entry name" value="RuvA domain 2-like"/>
    <property type="match status" value="1"/>
</dbReference>
<dbReference type="PROSITE" id="PS50164">
    <property type="entry name" value="GIY_YIG"/>
    <property type="match status" value="1"/>
</dbReference>
<dbReference type="PROSITE" id="PS50151">
    <property type="entry name" value="UVR"/>
    <property type="match status" value="1"/>
</dbReference>
<dbReference type="PROSITE" id="PS50165">
    <property type="entry name" value="UVRC"/>
    <property type="match status" value="1"/>
</dbReference>
<reference key="1">
    <citation type="journal article" date="2002" name="Environ. Microbiol.">
        <title>Complete genome sequence and comparative analysis of the metabolically versatile Pseudomonas putida KT2440.</title>
        <authorList>
            <person name="Nelson K.E."/>
            <person name="Weinel C."/>
            <person name="Paulsen I.T."/>
            <person name="Dodson R.J."/>
            <person name="Hilbert H."/>
            <person name="Martins dos Santos V.A.P."/>
            <person name="Fouts D.E."/>
            <person name="Gill S.R."/>
            <person name="Pop M."/>
            <person name="Holmes M."/>
            <person name="Brinkac L.M."/>
            <person name="Beanan M.J."/>
            <person name="DeBoy R.T."/>
            <person name="Daugherty S.C."/>
            <person name="Kolonay J.F."/>
            <person name="Madupu R."/>
            <person name="Nelson W.C."/>
            <person name="White O."/>
            <person name="Peterson J.D."/>
            <person name="Khouri H.M."/>
            <person name="Hance I."/>
            <person name="Chris Lee P."/>
            <person name="Holtzapple E.K."/>
            <person name="Scanlan D."/>
            <person name="Tran K."/>
            <person name="Moazzez A."/>
            <person name="Utterback T.R."/>
            <person name="Rizzo M."/>
            <person name="Lee K."/>
            <person name="Kosack D."/>
            <person name="Moestl D."/>
            <person name="Wedler H."/>
            <person name="Lauber J."/>
            <person name="Stjepandic D."/>
            <person name="Hoheisel J."/>
            <person name="Straetz M."/>
            <person name="Heim S."/>
            <person name="Kiewitz C."/>
            <person name="Eisen J.A."/>
            <person name="Timmis K.N."/>
            <person name="Duesterhoeft A."/>
            <person name="Tuemmler B."/>
            <person name="Fraser C.M."/>
        </authorList>
    </citation>
    <scope>NUCLEOTIDE SEQUENCE [LARGE SCALE GENOMIC DNA]</scope>
    <source>
        <strain>ATCC 47054 / DSM 6125 / CFBP 8728 / NCIMB 11950 / KT2440</strain>
    </source>
</reference>